<keyword id="KW-0413">Isomerase</keyword>
<keyword id="KW-0819">tRNA processing</keyword>
<accession>Q1CLR4</accession>
<accession>C4GPS4</accession>
<name>TRUD_YERPN</name>
<sequence length="349" mass="39144">MDMENLTWLHGKPTASGILKANPEDFVVVEDLGFEPDGEGEHLLVRIRKNGCNTQFVADYLARFAKLHPRLVSYAGLKDRHAVTEQWFCLHLPGKEAPDLATFELEGCEVLEAVRHKRKLRIGSLKGNAFTLVLRHITDRQDVEQRLQQIAAQGVPNYFGSQRFGRGGNNLVQARLWANNEIRVKERSKRSFYLSASRSAMFNLISSYRLAQQLSTTVLEGDALQLSGRGSWFVAQADELAALQQRVTAGELNITAPLPGDSELGTHGEALAFEQACLAEQTELLSLIKRERVEGSRRAVLLKPQNMISNWWDDVTLELSFWLPAGSFATSVVREIMNQDRADDTDIIE</sequence>
<proteinExistence type="inferred from homology"/>
<comment type="function">
    <text evidence="1">Responsible for synthesis of pseudouridine from uracil-13 in transfer RNAs.</text>
</comment>
<comment type="catalytic activity">
    <reaction evidence="1">
        <text>uridine(13) in tRNA = pseudouridine(13) in tRNA</text>
        <dbReference type="Rhea" id="RHEA:42540"/>
        <dbReference type="Rhea" id="RHEA-COMP:10105"/>
        <dbReference type="Rhea" id="RHEA-COMP:10106"/>
        <dbReference type="ChEBI" id="CHEBI:65314"/>
        <dbReference type="ChEBI" id="CHEBI:65315"/>
        <dbReference type="EC" id="5.4.99.27"/>
    </reaction>
</comment>
<comment type="similarity">
    <text evidence="1">Belongs to the pseudouridine synthase TruD family.</text>
</comment>
<feature type="chain" id="PRO_1000084772" description="tRNA pseudouridine synthase D">
    <location>
        <begin position="1"/>
        <end position="349"/>
    </location>
</feature>
<feature type="domain" description="TRUD" evidence="1">
    <location>
        <begin position="154"/>
        <end position="302"/>
    </location>
</feature>
<feature type="active site" description="Nucleophile" evidence="1">
    <location>
        <position position="79"/>
    </location>
</feature>
<feature type="binding site" evidence="1">
    <location>
        <position position="26"/>
    </location>
    <ligand>
        <name>substrate</name>
    </ligand>
</feature>
<feature type="binding site" evidence="1">
    <location>
        <position position="128"/>
    </location>
    <ligand>
        <name>substrate</name>
    </ligand>
</feature>
<feature type="binding site" evidence="1">
    <location>
        <position position="328"/>
    </location>
    <ligand>
        <name>substrate</name>
    </ligand>
</feature>
<evidence type="ECO:0000255" key="1">
    <source>
        <dbReference type="HAMAP-Rule" id="MF_01082"/>
    </source>
</evidence>
<gene>
    <name evidence="1" type="primary">truD</name>
    <name type="ordered locus">YPN_0734</name>
    <name type="ORF">YP516_0782</name>
</gene>
<protein>
    <recommendedName>
        <fullName evidence="1">tRNA pseudouridine synthase D</fullName>
        <ecNumber evidence="1">5.4.99.27</ecNumber>
    </recommendedName>
    <alternativeName>
        <fullName evidence="1">tRNA pseudouridine(13) synthase</fullName>
    </alternativeName>
    <alternativeName>
        <fullName evidence="1">tRNA pseudouridylate synthase D</fullName>
    </alternativeName>
    <alternativeName>
        <fullName evidence="1">tRNA-uridine isomerase D</fullName>
    </alternativeName>
</protein>
<organism>
    <name type="scientific">Yersinia pestis bv. Antiqua (strain Nepal516)</name>
    <dbReference type="NCBI Taxonomy" id="377628"/>
    <lineage>
        <taxon>Bacteria</taxon>
        <taxon>Pseudomonadati</taxon>
        <taxon>Pseudomonadota</taxon>
        <taxon>Gammaproteobacteria</taxon>
        <taxon>Enterobacterales</taxon>
        <taxon>Yersiniaceae</taxon>
        <taxon>Yersinia</taxon>
    </lineage>
</organism>
<dbReference type="EC" id="5.4.99.27" evidence="1"/>
<dbReference type="EMBL" id="CP000305">
    <property type="protein sequence ID" value="ABG17066.1"/>
    <property type="molecule type" value="Genomic_DNA"/>
</dbReference>
<dbReference type="EMBL" id="ACNQ01000007">
    <property type="protein sequence ID" value="EEO77930.1"/>
    <property type="molecule type" value="Genomic_DNA"/>
</dbReference>
<dbReference type="RefSeq" id="WP_002209393.1">
    <property type="nucleotide sequence ID" value="NZ_ACNQ01000007.1"/>
</dbReference>
<dbReference type="SMR" id="Q1CLR4"/>
<dbReference type="GeneID" id="57975350"/>
<dbReference type="KEGG" id="ypn:YPN_0734"/>
<dbReference type="HOGENOM" id="CLU_005281_4_0_6"/>
<dbReference type="Proteomes" id="UP000008936">
    <property type="component" value="Chromosome"/>
</dbReference>
<dbReference type="GO" id="GO:0005829">
    <property type="term" value="C:cytosol"/>
    <property type="evidence" value="ECO:0007669"/>
    <property type="project" value="TreeGrafter"/>
</dbReference>
<dbReference type="GO" id="GO:0003723">
    <property type="term" value="F:RNA binding"/>
    <property type="evidence" value="ECO:0007669"/>
    <property type="project" value="InterPro"/>
</dbReference>
<dbReference type="GO" id="GO:0160150">
    <property type="term" value="F:tRNA pseudouridine(13) synthase activity"/>
    <property type="evidence" value="ECO:0007669"/>
    <property type="project" value="UniProtKB-EC"/>
</dbReference>
<dbReference type="GO" id="GO:0031119">
    <property type="term" value="P:tRNA pseudouridine synthesis"/>
    <property type="evidence" value="ECO:0007669"/>
    <property type="project" value="UniProtKB-UniRule"/>
</dbReference>
<dbReference type="CDD" id="cd02575">
    <property type="entry name" value="PseudoU_synth_EcTruD"/>
    <property type="match status" value="1"/>
</dbReference>
<dbReference type="FunFam" id="3.30.2340.10:FF:000001">
    <property type="entry name" value="tRNA pseudouridine synthase D"/>
    <property type="match status" value="1"/>
</dbReference>
<dbReference type="FunFam" id="3.30.2350.20:FF:000001">
    <property type="entry name" value="tRNA pseudouridine synthase D"/>
    <property type="match status" value="1"/>
</dbReference>
<dbReference type="Gene3D" id="3.30.2350.20">
    <property type="entry name" value="TruD, catalytic domain"/>
    <property type="match status" value="1"/>
</dbReference>
<dbReference type="Gene3D" id="3.30.2340.10">
    <property type="entry name" value="TruD, insertion domain"/>
    <property type="match status" value="1"/>
</dbReference>
<dbReference type="HAMAP" id="MF_01082">
    <property type="entry name" value="TruD"/>
    <property type="match status" value="1"/>
</dbReference>
<dbReference type="InterPro" id="IPR020103">
    <property type="entry name" value="PsdUridine_synth_cat_dom_sf"/>
</dbReference>
<dbReference type="InterPro" id="IPR001656">
    <property type="entry name" value="PsdUridine_synth_TruD"/>
</dbReference>
<dbReference type="InterPro" id="IPR020119">
    <property type="entry name" value="PsdUridine_synth_TruD_CS"/>
</dbReference>
<dbReference type="InterPro" id="IPR011760">
    <property type="entry name" value="PsdUridine_synth_TruD_insert"/>
</dbReference>
<dbReference type="InterPro" id="IPR042214">
    <property type="entry name" value="TruD_catalytic"/>
</dbReference>
<dbReference type="InterPro" id="IPR043165">
    <property type="entry name" value="TruD_insert_sf"/>
</dbReference>
<dbReference type="InterPro" id="IPR050170">
    <property type="entry name" value="TruD_pseudoU_synthase"/>
</dbReference>
<dbReference type="NCBIfam" id="NF002155">
    <property type="entry name" value="PRK00984.1-4"/>
    <property type="match status" value="1"/>
</dbReference>
<dbReference type="NCBIfam" id="TIGR00094">
    <property type="entry name" value="tRNA_TruD_broad"/>
    <property type="match status" value="1"/>
</dbReference>
<dbReference type="PANTHER" id="PTHR47811">
    <property type="entry name" value="TRNA PSEUDOURIDINE SYNTHASE D"/>
    <property type="match status" value="1"/>
</dbReference>
<dbReference type="PANTHER" id="PTHR47811:SF1">
    <property type="entry name" value="TRNA PSEUDOURIDINE SYNTHASE D"/>
    <property type="match status" value="1"/>
</dbReference>
<dbReference type="Pfam" id="PF01142">
    <property type="entry name" value="TruD"/>
    <property type="match status" value="2"/>
</dbReference>
<dbReference type="SUPFAM" id="SSF55120">
    <property type="entry name" value="Pseudouridine synthase"/>
    <property type="match status" value="1"/>
</dbReference>
<dbReference type="PROSITE" id="PS50984">
    <property type="entry name" value="TRUD"/>
    <property type="match status" value="1"/>
</dbReference>
<dbReference type="PROSITE" id="PS01268">
    <property type="entry name" value="UPF0024"/>
    <property type="match status" value="1"/>
</dbReference>
<reference key="1">
    <citation type="journal article" date="2006" name="J. Bacteriol.">
        <title>Complete genome sequence of Yersinia pestis strains Antiqua and Nepal516: evidence of gene reduction in an emerging pathogen.</title>
        <authorList>
            <person name="Chain P.S.G."/>
            <person name="Hu P."/>
            <person name="Malfatti S.A."/>
            <person name="Radnedge L."/>
            <person name="Larimer F."/>
            <person name="Vergez L.M."/>
            <person name="Worsham P."/>
            <person name="Chu M.C."/>
            <person name="Andersen G.L."/>
        </authorList>
    </citation>
    <scope>NUCLEOTIDE SEQUENCE [LARGE SCALE GENOMIC DNA]</scope>
    <source>
        <strain>Nepal516</strain>
    </source>
</reference>
<reference key="2">
    <citation type="submission" date="2009-04" db="EMBL/GenBank/DDBJ databases">
        <title>Yersinia pestis Nepal516A whole genome shotgun sequencing project.</title>
        <authorList>
            <person name="Plunkett G. III"/>
            <person name="Anderson B.D."/>
            <person name="Baumler D.J."/>
            <person name="Burland V."/>
            <person name="Cabot E.L."/>
            <person name="Glasner J.D."/>
            <person name="Mau B."/>
            <person name="Neeno-Eckwall E."/>
            <person name="Perna N.T."/>
            <person name="Munk A.C."/>
            <person name="Tapia R."/>
            <person name="Green L.D."/>
            <person name="Rogers Y.C."/>
            <person name="Detter J.C."/>
            <person name="Bruce D.C."/>
            <person name="Brettin T.S."/>
        </authorList>
    </citation>
    <scope>NUCLEOTIDE SEQUENCE [LARGE SCALE GENOMIC DNA]</scope>
    <source>
        <strain>Nepal516</strain>
    </source>
</reference>